<keyword id="KW-0010">Activator</keyword>
<keyword id="KW-0539">Nucleus</keyword>
<keyword id="KW-1185">Reference proteome</keyword>
<keyword id="KW-0804">Transcription</keyword>
<keyword id="KW-0805">Transcription regulation</keyword>
<dbReference type="EMBL" id="AY648340">
    <property type="protein sequence ID" value="AAV65896.1"/>
    <property type="molecule type" value="mRNA"/>
</dbReference>
<dbReference type="RefSeq" id="NP_001037105.1">
    <property type="nucleotide sequence ID" value="NM_001043640.1"/>
</dbReference>
<dbReference type="SMR" id="Q5ISW3"/>
<dbReference type="FunCoup" id="Q5ISW3">
    <property type="interactions" value="781"/>
</dbReference>
<dbReference type="STRING" id="7091.Q5ISW3"/>
<dbReference type="PaxDb" id="7091-BGIBMGA010131-TA"/>
<dbReference type="EnsemblMetazoa" id="NM_001043640.1">
    <property type="protein sequence ID" value="NP_001037105.1"/>
    <property type="gene ID" value="GeneID_692650"/>
</dbReference>
<dbReference type="GeneID" id="692650"/>
<dbReference type="KEGG" id="bmor:692650"/>
<dbReference type="CTD" id="45881"/>
<dbReference type="eggNOG" id="ENOG502QRNJ">
    <property type="taxonomic scope" value="Eukaryota"/>
</dbReference>
<dbReference type="HOGENOM" id="CLU_101133_0_0_1"/>
<dbReference type="InParanoid" id="Q5ISW3"/>
<dbReference type="OrthoDB" id="648071at7088"/>
<dbReference type="Proteomes" id="UP000005204">
    <property type="component" value="Unassembled WGS sequence"/>
</dbReference>
<dbReference type="GO" id="GO:0016592">
    <property type="term" value="C:mediator complex"/>
    <property type="evidence" value="ECO:0007669"/>
    <property type="project" value="InterPro"/>
</dbReference>
<dbReference type="GO" id="GO:0003712">
    <property type="term" value="F:transcription coregulator activity"/>
    <property type="evidence" value="ECO:0007669"/>
    <property type="project" value="TreeGrafter"/>
</dbReference>
<dbReference type="GO" id="GO:0006357">
    <property type="term" value="P:regulation of transcription by RNA polymerase II"/>
    <property type="evidence" value="ECO:0007669"/>
    <property type="project" value="TreeGrafter"/>
</dbReference>
<dbReference type="InterPro" id="IPR021018">
    <property type="entry name" value="Mediator_Med29_met"/>
</dbReference>
<dbReference type="PANTHER" id="PTHR28314">
    <property type="entry name" value="MEDIATOR OF RNA POLYMERASE II TRANSCRIPTION SUBUNIT 29"/>
    <property type="match status" value="1"/>
</dbReference>
<dbReference type="PANTHER" id="PTHR28314:SF1">
    <property type="entry name" value="MEDIATOR OF RNA POLYMERASE II TRANSCRIPTION SUBUNIT 29"/>
    <property type="match status" value="1"/>
</dbReference>
<dbReference type="Pfam" id="PF11568">
    <property type="entry name" value="Med29"/>
    <property type="match status" value="1"/>
</dbReference>
<feature type="chain" id="PRO_0000305702" description="Mediator of RNA polymerase II transcription subunit 29">
    <location>
        <begin position="1"/>
        <end position="192"/>
    </location>
</feature>
<feature type="region of interest" description="Disordered" evidence="2">
    <location>
        <begin position="32"/>
        <end position="51"/>
    </location>
</feature>
<evidence type="ECO:0000250" key="1"/>
<evidence type="ECO:0000256" key="2">
    <source>
        <dbReference type="SAM" id="MobiDB-lite"/>
    </source>
</evidence>
<evidence type="ECO:0000305" key="3"/>
<reference key="1">
    <citation type="journal article" date="2005" name="Dev. Genes Evol.">
        <title>Functional conservation and divergence of intersex, a gene required for female differentiation in Drosophila melanogaster.</title>
        <authorList>
            <person name="Siegal M.L."/>
            <person name="Baker B.S."/>
        </authorList>
    </citation>
    <scope>NUCLEOTIDE SEQUENCE [MRNA]</scope>
</reference>
<name>MED29_BOMMO</name>
<accession>Q5ISW3</accession>
<gene>
    <name type="primary">ix</name>
    <name type="synonym">MED29</name>
</gene>
<organism>
    <name type="scientific">Bombyx mori</name>
    <name type="common">Silk moth</name>
    <dbReference type="NCBI Taxonomy" id="7091"/>
    <lineage>
        <taxon>Eukaryota</taxon>
        <taxon>Metazoa</taxon>
        <taxon>Ecdysozoa</taxon>
        <taxon>Arthropoda</taxon>
        <taxon>Hexapoda</taxon>
        <taxon>Insecta</taxon>
        <taxon>Pterygota</taxon>
        <taxon>Neoptera</taxon>
        <taxon>Endopterygota</taxon>
        <taxon>Lepidoptera</taxon>
        <taxon>Glossata</taxon>
        <taxon>Ditrysia</taxon>
        <taxon>Bombycoidea</taxon>
        <taxon>Bombycidae</taxon>
        <taxon>Bombycinae</taxon>
        <taxon>Bombyx</taxon>
    </lineage>
</organism>
<comment type="function">
    <text evidence="1">Component of the Mediator complex, a coactivator involved in the regulated transcription of nearly all RNA polymerase II-dependent genes. Mediator functions as a bridge to convey information from gene-specific regulatory proteins to the basal RNA polymerase II transcription machinery. Mediator is recruited to promoters by direct interactions with regulatory proteins and serves as a scaffold for the assembly of a functional preinitiation complex with RNA polymerase II and the general transcription factors (By similarity).</text>
</comment>
<comment type="subunit">
    <text evidence="1">Component of the Mediator complex.</text>
</comment>
<comment type="subcellular location">
    <subcellularLocation>
        <location evidence="3">Nucleus</location>
    </subcellularLocation>
</comment>
<comment type="similarity">
    <text evidence="3">Belongs to the Mediator complex subunit 29 family.</text>
</comment>
<protein>
    <recommendedName>
        <fullName>Mediator of RNA polymerase II transcription subunit 29</fullName>
    </recommendedName>
    <alternativeName>
        <fullName>Mediator complex subunit 29</fullName>
    </alternativeName>
    <alternativeName>
        <fullName>Protein intersex</fullName>
    </alternativeName>
</protein>
<proteinExistence type="evidence at transcript level"/>
<sequence length="192" mass="21260">MNHNQMNMHVPMNQVAGAPNVAMQMPVPGPIMQQQSPQQMQPAPVPQQTQQDKMDNISKVKSLMGSLRESIPMTLKSAAQILHQNHNADSNTQKGMDNPVPRFEKNLEEFFSICDQMELHLRTATTCIQQAQSAAHYLPLSVIASRLDSGPTTQETTLSYPQYLKTVGLQISYAKDIHDTLVAAAQNISPPE</sequence>